<dbReference type="EMBL" id="AJ851892">
    <property type="protein sequence ID" value="CAH65471.1"/>
    <property type="molecule type" value="Genomic_DNA"/>
</dbReference>
<dbReference type="eggNOG" id="ENOG502T821">
    <property type="taxonomic scope" value="Eukaryota"/>
</dbReference>
<dbReference type="OrthoDB" id="6436322at2759"/>
<dbReference type="GO" id="GO:0005576">
    <property type="term" value="C:extracellular region"/>
    <property type="evidence" value="ECO:0000250"/>
    <property type="project" value="UniProtKB"/>
</dbReference>
<dbReference type="GO" id="GO:0005615">
    <property type="term" value="C:extracellular space"/>
    <property type="evidence" value="ECO:0007669"/>
    <property type="project" value="EnsemblMetazoa"/>
</dbReference>
<dbReference type="GO" id="GO:0071858">
    <property type="term" value="F:corazonin receptor binding"/>
    <property type="evidence" value="ECO:0007669"/>
    <property type="project" value="EnsemblMetazoa"/>
</dbReference>
<dbReference type="GO" id="GO:0005184">
    <property type="term" value="F:neuropeptide hormone activity"/>
    <property type="evidence" value="ECO:0000250"/>
    <property type="project" value="UniProtKB"/>
</dbReference>
<dbReference type="GO" id="GO:0006117">
    <property type="term" value="P:acetaldehyde metabolic process"/>
    <property type="evidence" value="ECO:0007669"/>
    <property type="project" value="EnsemblMetazoa"/>
</dbReference>
<dbReference type="GO" id="GO:0048149">
    <property type="term" value="P:behavioral response to ethanol"/>
    <property type="evidence" value="ECO:0007669"/>
    <property type="project" value="EnsemblMetazoa"/>
</dbReference>
<dbReference type="GO" id="GO:0071361">
    <property type="term" value="P:cellular response to ethanol"/>
    <property type="evidence" value="ECO:0007669"/>
    <property type="project" value="EnsemblMetazoa"/>
</dbReference>
<dbReference type="GO" id="GO:0007619">
    <property type="term" value="P:courtship behavior"/>
    <property type="evidence" value="ECO:0007669"/>
    <property type="project" value="EnsemblMetazoa"/>
</dbReference>
<dbReference type="GO" id="GO:0007218">
    <property type="term" value="P:neuropeptide signaling pathway"/>
    <property type="evidence" value="ECO:0007669"/>
    <property type="project" value="UniProtKB-KW"/>
</dbReference>
<dbReference type="GO" id="GO:0045823">
    <property type="term" value="P:positive regulation of heart contraction"/>
    <property type="evidence" value="ECO:0000250"/>
    <property type="project" value="UniProtKB"/>
</dbReference>
<dbReference type="InterPro" id="IPR020190">
    <property type="entry name" value="Procorazonin"/>
</dbReference>
<dbReference type="Pfam" id="PF17308">
    <property type="entry name" value="Corazonin"/>
    <property type="match status" value="1"/>
</dbReference>
<sequence>MLRLLLLPLFLFTLSMCMGQTFQYSRGWTNGKRSFNAASPLLTTGHLHRGSELGLSDLYDLQEWTSDRRLERCLSQLQRSLIARNCVPGSDFNANRVDPDPESSAHPRLGNINNENVLYSSANVPTRHRQSNELLEELSAAGGASAEPNVFGKH</sequence>
<comment type="function">
    <text evidence="1">Cardioactive peptide. Corazonin is probably involved in the physiological regulation of the heart beat. Clock (Clk) and cycle (cyc) proteins negatively regulate Crz transcription in a cell-specific manner (By similarity).</text>
</comment>
<comment type="subcellular location">
    <molecule>Corazonin</molecule>
    <subcellularLocation>
        <location evidence="1">Secreted</location>
    </subcellularLocation>
</comment>
<comment type="subcellular location">
    <molecule>Corazonin precursor-related peptide</molecule>
    <subcellularLocation>
        <location evidence="1">Secreted</location>
    </subcellularLocation>
</comment>
<comment type="tissue specificity">
    <text evidence="3">Expression is restricted to 24 neurons in the larval CNS (8 in the brain and 16 in the ventral nerve cord) and 12-16 neurons in the pars lateralis of the adult brain.</text>
</comment>
<comment type="similarity">
    <text evidence="4">Belongs to the corazonin family.</text>
</comment>
<proteinExistence type="evidence at transcript level"/>
<keyword id="KW-0027">Amidation</keyword>
<keyword id="KW-0165">Cleavage on pair of basic residues</keyword>
<keyword id="KW-0527">Neuropeptide</keyword>
<keyword id="KW-0873">Pyrrolidone carboxylic acid</keyword>
<keyword id="KW-0964">Secreted</keyword>
<keyword id="KW-0732">Signal</keyword>
<gene>
    <name type="primary">Crz</name>
</gene>
<name>CORZ_DROER</name>
<accession>Q5W1L4</accession>
<evidence type="ECO:0000250" key="1">
    <source>
        <dbReference type="UniProtKB" id="Q26377"/>
    </source>
</evidence>
<evidence type="ECO:0000255" key="2"/>
<evidence type="ECO:0000269" key="3">
    <source>
    </source>
</evidence>
<evidence type="ECO:0000305" key="4"/>
<evidence type="ECO:0000312" key="5">
    <source>
        <dbReference type="EMBL" id="CAH65471.1"/>
    </source>
</evidence>
<feature type="signal peptide" evidence="1">
    <location>
        <begin position="1"/>
        <end position="19"/>
    </location>
</feature>
<feature type="chain" id="PRO_0000341609" description="Pro-corazonin" evidence="2">
    <location>
        <begin position="20"/>
        <end position="154"/>
    </location>
</feature>
<feature type="peptide" id="PRO_0000341497" description="Corazonin">
    <location>
        <begin position="20"/>
        <end position="30"/>
    </location>
</feature>
<feature type="peptide" id="PRO_0000341498" description="Corazonin precursor-related peptide">
    <location>
        <begin position="34"/>
        <end position="67"/>
    </location>
</feature>
<feature type="propeptide" id="PRO_0000341499" evidence="1">
    <location>
        <begin position="70"/>
        <end position="154"/>
    </location>
</feature>
<feature type="modified residue" description="Pyrrolidone carboxylic acid" evidence="1">
    <location>
        <position position="20"/>
    </location>
</feature>
<feature type="modified residue" description="Asparagine amide" evidence="1">
    <location>
        <position position="30"/>
    </location>
</feature>
<organism>
    <name type="scientific">Drosophila erecta</name>
    <name type="common">Fruit fly</name>
    <dbReference type="NCBI Taxonomy" id="7220"/>
    <lineage>
        <taxon>Eukaryota</taxon>
        <taxon>Metazoa</taxon>
        <taxon>Ecdysozoa</taxon>
        <taxon>Arthropoda</taxon>
        <taxon>Hexapoda</taxon>
        <taxon>Insecta</taxon>
        <taxon>Pterygota</taxon>
        <taxon>Neoptera</taxon>
        <taxon>Endopterygota</taxon>
        <taxon>Diptera</taxon>
        <taxon>Brachycera</taxon>
        <taxon>Muscomorpha</taxon>
        <taxon>Ephydroidea</taxon>
        <taxon>Drosophilidae</taxon>
        <taxon>Drosophila</taxon>
        <taxon>Sophophora</taxon>
    </lineage>
</organism>
<protein>
    <recommendedName>
        <fullName>Pro-corazonin</fullName>
        <shortName>Crz</shortName>
        <shortName>De-Crz</shortName>
    </recommendedName>
    <component>
        <recommendedName>
            <fullName>Corazonin</fullName>
        </recommendedName>
    </component>
    <component>
        <recommendedName>
            <fullName>Corazonin precursor-related peptide</fullName>
            <shortName>CPRP</shortName>
        </recommendedName>
    </component>
</protein>
<reference evidence="4 5" key="1">
    <citation type="journal article" date="2005" name="J. Comp. Neurol.">
        <title>Comparative analysis of Corazonin-encoding genes (Crz's) in Drosophila species and functional insights into Crz-expressing neurons.</title>
        <authorList>
            <person name="Choi Y.J."/>
            <person name="Lee G."/>
            <person name="Hall J.C."/>
            <person name="Park J.H."/>
        </authorList>
    </citation>
    <scope>NUCLEOTIDE SEQUENCE [GENOMIC DNA]</scope>
    <scope>TISSUE SPECIFICITY</scope>
    <source>
        <tissue evidence="3">Head</tissue>
    </source>
</reference>